<reference key="1">
    <citation type="journal article" date="2005" name="Nucleic Acids Res.">
        <title>Genome dynamics and diversity of Shigella species, the etiologic agents of bacillary dysentery.</title>
        <authorList>
            <person name="Yang F."/>
            <person name="Yang J."/>
            <person name="Zhang X."/>
            <person name="Chen L."/>
            <person name="Jiang Y."/>
            <person name="Yan Y."/>
            <person name="Tang X."/>
            <person name="Wang J."/>
            <person name="Xiong Z."/>
            <person name="Dong J."/>
            <person name="Xue Y."/>
            <person name="Zhu Y."/>
            <person name="Xu X."/>
            <person name="Sun L."/>
            <person name="Chen S."/>
            <person name="Nie H."/>
            <person name="Peng J."/>
            <person name="Xu J."/>
            <person name="Wang Y."/>
            <person name="Yuan Z."/>
            <person name="Wen Y."/>
            <person name="Yao Z."/>
            <person name="Shen Y."/>
            <person name="Qiang B."/>
            <person name="Hou Y."/>
            <person name="Yu J."/>
            <person name="Jin Q."/>
        </authorList>
    </citation>
    <scope>NUCLEOTIDE SEQUENCE [LARGE SCALE GENOMIC DNA]</scope>
    <source>
        <strain>Sd197</strain>
    </source>
</reference>
<name>ASSY_SHIDS</name>
<comment type="catalytic activity">
    <reaction evidence="1">
        <text>L-citrulline + L-aspartate + ATP = 2-(N(omega)-L-arginino)succinate + AMP + diphosphate + H(+)</text>
        <dbReference type="Rhea" id="RHEA:10932"/>
        <dbReference type="ChEBI" id="CHEBI:15378"/>
        <dbReference type="ChEBI" id="CHEBI:29991"/>
        <dbReference type="ChEBI" id="CHEBI:30616"/>
        <dbReference type="ChEBI" id="CHEBI:33019"/>
        <dbReference type="ChEBI" id="CHEBI:57472"/>
        <dbReference type="ChEBI" id="CHEBI:57743"/>
        <dbReference type="ChEBI" id="CHEBI:456215"/>
        <dbReference type="EC" id="6.3.4.5"/>
    </reaction>
</comment>
<comment type="pathway">
    <text evidence="1">Amino-acid biosynthesis; L-arginine biosynthesis; L-arginine from L-ornithine and carbamoyl phosphate: step 2/3.</text>
</comment>
<comment type="subunit">
    <text evidence="1">Homotetramer.</text>
</comment>
<comment type="subcellular location">
    <subcellularLocation>
        <location evidence="1">Cytoplasm</location>
    </subcellularLocation>
</comment>
<comment type="similarity">
    <text evidence="1">Belongs to the argininosuccinate synthase family. Type 2 subfamily.</text>
</comment>
<keyword id="KW-0028">Amino-acid biosynthesis</keyword>
<keyword id="KW-0055">Arginine biosynthesis</keyword>
<keyword id="KW-0067">ATP-binding</keyword>
<keyword id="KW-0963">Cytoplasm</keyword>
<keyword id="KW-0436">Ligase</keyword>
<keyword id="KW-0547">Nucleotide-binding</keyword>
<keyword id="KW-1185">Reference proteome</keyword>
<protein>
    <recommendedName>
        <fullName evidence="1">Argininosuccinate synthase</fullName>
        <ecNumber evidence="1">6.3.4.5</ecNumber>
    </recommendedName>
    <alternativeName>
        <fullName evidence="1">Citrulline--aspartate ligase</fullName>
    </alternativeName>
</protein>
<evidence type="ECO:0000255" key="1">
    <source>
        <dbReference type="HAMAP-Rule" id="MF_00581"/>
    </source>
</evidence>
<dbReference type="EC" id="6.3.4.5" evidence="1"/>
<dbReference type="EMBL" id="CP000034">
    <property type="protein sequence ID" value="ABB63343.1"/>
    <property type="molecule type" value="Genomic_DNA"/>
</dbReference>
<dbReference type="RefSeq" id="WP_000207673.1">
    <property type="nucleotide sequence ID" value="NC_007606.1"/>
</dbReference>
<dbReference type="RefSeq" id="YP_404834.1">
    <property type="nucleotide sequence ID" value="NC_007606.1"/>
</dbReference>
<dbReference type="SMR" id="Q32BG2"/>
<dbReference type="STRING" id="300267.SDY_3351"/>
<dbReference type="EnsemblBacteria" id="ABB63343">
    <property type="protein sequence ID" value="ABB63343"/>
    <property type="gene ID" value="SDY_3351"/>
</dbReference>
<dbReference type="KEGG" id="sdy:SDY_3351"/>
<dbReference type="PATRIC" id="fig|300267.13.peg.4004"/>
<dbReference type="HOGENOM" id="CLU_032784_4_1_6"/>
<dbReference type="UniPathway" id="UPA00068">
    <property type="reaction ID" value="UER00113"/>
</dbReference>
<dbReference type="Proteomes" id="UP000002716">
    <property type="component" value="Chromosome"/>
</dbReference>
<dbReference type="GO" id="GO:0005737">
    <property type="term" value="C:cytoplasm"/>
    <property type="evidence" value="ECO:0007669"/>
    <property type="project" value="UniProtKB-SubCell"/>
</dbReference>
<dbReference type="GO" id="GO:0004055">
    <property type="term" value="F:argininosuccinate synthase activity"/>
    <property type="evidence" value="ECO:0007669"/>
    <property type="project" value="UniProtKB-UniRule"/>
</dbReference>
<dbReference type="GO" id="GO:0005524">
    <property type="term" value="F:ATP binding"/>
    <property type="evidence" value="ECO:0007669"/>
    <property type="project" value="UniProtKB-UniRule"/>
</dbReference>
<dbReference type="GO" id="GO:0042803">
    <property type="term" value="F:protein homodimerization activity"/>
    <property type="evidence" value="ECO:0007669"/>
    <property type="project" value="InterPro"/>
</dbReference>
<dbReference type="GO" id="GO:0000053">
    <property type="term" value="P:argininosuccinate metabolic process"/>
    <property type="evidence" value="ECO:0007669"/>
    <property type="project" value="TreeGrafter"/>
</dbReference>
<dbReference type="GO" id="GO:0006526">
    <property type="term" value="P:L-arginine biosynthetic process"/>
    <property type="evidence" value="ECO:0007669"/>
    <property type="project" value="UniProtKB-UniRule"/>
</dbReference>
<dbReference type="GO" id="GO:0000050">
    <property type="term" value="P:urea cycle"/>
    <property type="evidence" value="ECO:0007669"/>
    <property type="project" value="TreeGrafter"/>
</dbReference>
<dbReference type="CDD" id="cd01999">
    <property type="entry name" value="ASS"/>
    <property type="match status" value="1"/>
</dbReference>
<dbReference type="FunFam" id="1.10.287.400:FF:000001">
    <property type="entry name" value="Argininosuccinate synthase"/>
    <property type="match status" value="1"/>
</dbReference>
<dbReference type="Gene3D" id="1.10.287.400">
    <property type="match status" value="1"/>
</dbReference>
<dbReference type="Gene3D" id="3.90.1260.10">
    <property type="entry name" value="Argininosuccinate synthetase, chain A, domain 2"/>
    <property type="match status" value="1"/>
</dbReference>
<dbReference type="Gene3D" id="3.40.50.620">
    <property type="entry name" value="HUPs"/>
    <property type="match status" value="1"/>
</dbReference>
<dbReference type="HAMAP" id="MF_00581">
    <property type="entry name" value="Arg_succ_synth_type2"/>
    <property type="match status" value="1"/>
</dbReference>
<dbReference type="InterPro" id="IPR023437">
    <property type="entry name" value="Arg_succ_synth_type2_subfam"/>
</dbReference>
<dbReference type="InterPro" id="IPR048268">
    <property type="entry name" value="Arginosuc_syn_C"/>
</dbReference>
<dbReference type="InterPro" id="IPR048267">
    <property type="entry name" value="Arginosuc_syn_N"/>
</dbReference>
<dbReference type="InterPro" id="IPR001518">
    <property type="entry name" value="Arginosuc_synth"/>
</dbReference>
<dbReference type="InterPro" id="IPR018223">
    <property type="entry name" value="Arginosuc_synth_CS"/>
</dbReference>
<dbReference type="InterPro" id="IPR023434">
    <property type="entry name" value="Arginosuc_synth_type_1_subfam"/>
</dbReference>
<dbReference type="InterPro" id="IPR024074">
    <property type="entry name" value="AS_cat/multimer_dom_body"/>
</dbReference>
<dbReference type="InterPro" id="IPR024073">
    <property type="entry name" value="AS_multimer_C_tail"/>
</dbReference>
<dbReference type="InterPro" id="IPR014729">
    <property type="entry name" value="Rossmann-like_a/b/a_fold"/>
</dbReference>
<dbReference type="NCBIfam" id="TIGR00032">
    <property type="entry name" value="argG"/>
    <property type="match status" value="1"/>
</dbReference>
<dbReference type="NCBIfam" id="NF003779">
    <property type="entry name" value="PRK05370.1"/>
    <property type="match status" value="1"/>
</dbReference>
<dbReference type="PANTHER" id="PTHR11587">
    <property type="entry name" value="ARGININOSUCCINATE SYNTHASE"/>
    <property type="match status" value="1"/>
</dbReference>
<dbReference type="PANTHER" id="PTHR11587:SF2">
    <property type="entry name" value="ARGININOSUCCINATE SYNTHASE"/>
    <property type="match status" value="1"/>
</dbReference>
<dbReference type="Pfam" id="PF20979">
    <property type="entry name" value="Arginosuc_syn_C"/>
    <property type="match status" value="1"/>
</dbReference>
<dbReference type="Pfam" id="PF00764">
    <property type="entry name" value="Arginosuc_synth"/>
    <property type="match status" value="1"/>
</dbReference>
<dbReference type="SUPFAM" id="SSF52402">
    <property type="entry name" value="Adenine nucleotide alpha hydrolases-like"/>
    <property type="match status" value="1"/>
</dbReference>
<dbReference type="SUPFAM" id="SSF69864">
    <property type="entry name" value="Argininosuccinate synthetase, C-terminal domain"/>
    <property type="match status" value="1"/>
</dbReference>
<dbReference type="PROSITE" id="PS00564">
    <property type="entry name" value="ARGININOSUCCIN_SYN_1"/>
    <property type="match status" value="1"/>
</dbReference>
<dbReference type="PROSITE" id="PS00565">
    <property type="entry name" value="ARGININOSUCCIN_SYN_2"/>
    <property type="match status" value="1"/>
</dbReference>
<sequence length="447" mass="49911">MTTILKHLPVGQRIGIAFSGGLDTSAALLWMRQKGAVPYAYTANLGQPDEEDYDAIPRRAMEYGAENARLIDCRKQLVAEGIAAIQCGAFHNTTGGLTYFNTTPLGRAVTGTMLVAAMKEDGVNIWGDGSTYKGNDIERFYRYGLLTNAELQIYKPWLDTDFIDELGGRHEMSEFMIACGFDYKMSVEKAYSTDSNMLGATHEAKDLEYLNSSVKIVNPIMGVKFWDESVKIPAEEVTVRFEQGHPVALNGKTFSDDVEMMLEANRIGGRHGLGMSDQIENRIIEAKSRGIYEAPGMALLHIAYERLLTGIHNEDTIEQYHAHGRQLGRLLYQGRWFDSQALMLRDSLQRWVASQITGEVTLELRHGNDYSILNTVSENLTYKPERLTMEKGDSVFSPDDRIGQLTMRNLDITDTREKLFGYAKTGLLSSSAASGVPQMENLENKGQ</sequence>
<accession>Q32BG2</accession>
<proteinExistence type="inferred from homology"/>
<gene>
    <name evidence="1" type="primary">argG</name>
    <name type="ordered locus">SDY_3351</name>
</gene>
<feature type="chain" id="PRO_1000025442" description="Argininosuccinate synthase">
    <location>
        <begin position="1"/>
        <end position="447"/>
    </location>
</feature>
<feature type="binding site" evidence="1">
    <location>
        <begin position="17"/>
        <end position="25"/>
    </location>
    <ligand>
        <name>ATP</name>
        <dbReference type="ChEBI" id="CHEBI:30616"/>
    </ligand>
</feature>
<feature type="binding site" evidence="1">
    <location>
        <position position="43"/>
    </location>
    <ligand>
        <name>ATP</name>
        <dbReference type="ChEBI" id="CHEBI:30616"/>
    </ligand>
</feature>
<feature type="binding site" evidence="1">
    <location>
        <position position="99"/>
    </location>
    <ligand>
        <name>L-citrulline</name>
        <dbReference type="ChEBI" id="CHEBI:57743"/>
    </ligand>
</feature>
<feature type="binding site" evidence="1">
    <location>
        <position position="129"/>
    </location>
    <ligand>
        <name>ATP</name>
        <dbReference type="ChEBI" id="CHEBI:30616"/>
    </ligand>
</feature>
<feature type="binding site" evidence="1">
    <location>
        <position position="131"/>
    </location>
    <ligand>
        <name>ATP</name>
        <dbReference type="ChEBI" id="CHEBI:30616"/>
    </ligand>
</feature>
<feature type="binding site" evidence="1">
    <location>
        <position position="131"/>
    </location>
    <ligand>
        <name>L-aspartate</name>
        <dbReference type="ChEBI" id="CHEBI:29991"/>
    </ligand>
</feature>
<feature type="binding site" evidence="1">
    <location>
        <position position="135"/>
    </location>
    <ligand>
        <name>L-aspartate</name>
        <dbReference type="ChEBI" id="CHEBI:29991"/>
    </ligand>
</feature>
<feature type="binding site" evidence="1">
    <location>
        <position position="135"/>
    </location>
    <ligand>
        <name>L-citrulline</name>
        <dbReference type="ChEBI" id="CHEBI:57743"/>
    </ligand>
</feature>
<feature type="binding site" evidence="1">
    <location>
        <position position="136"/>
    </location>
    <ligand>
        <name>ATP</name>
        <dbReference type="ChEBI" id="CHEBI:30616"/>
    </ligand>
</feature>
<feature type="binding site" evidence="1">
    <location>
        <position position="136"/>
    </location>
    <ligand>
        <name>L-aspartate</name>
        <dbReference type="ChEBI" id="CHEBI:29991"/>
    </ligand>
</feature>
<feature type="binding site" evidence="1">
    <location>
        <position position="139"/>
    </location>
    <ligand>
        <name>L-citrulline</name>
        <dbReference type="ChEBI" id="CHEBI:57743"/>
    </ligand>
</feature>
<feature type="binding site" evidence="1">
    <location>
        <position position="192"/>
    </location>
    <ligand>
        <name>L-citrulline</name>
        <dbReference type="ChEBI" id="CHEBI:57743"/>
    </ligand>
</feature>
<feature type="binding site" evidence="1">
    <location>
        <position position="194"/>
    </location>
    <ligand>
        <name>ATP</name>
        <dbReference type="ChEBI" id="CHEBI:30616"/>
    </ligand>
</feature>
<feature type="binding site" evidence="1">
    <location>
        <position position="201"/>
    </location>
    <ligand>
        <name>L-citrulline</name>
        <dbReference type="ChEBI" id="CHEBI:57743"/>
    </ligand>
</feature>
<feature type="binding site" evidence="1">
    <location>
        <position position="203"/>
    </location>
    <ligand>
        <name>L-citrulline</name>
        <dbReference type="ChEBI" id="CHEBI:57743"/>
    </ligand>
</feature>
<feature type="binding site" evidence="1">
    <location>
        <position position="280"/>
    </location>
    <ligand>
        <name>L-citrulline</name>
        <dbReference type="ChEBI" id="CHEBI:57743"/>
    </ligand>
</feature>
<organism>
    <name type="scientific">Shigella dysenteriae serotype 1 (strain Sd197)</name>
    <dbReference type="NCBI Taxonomy" id="300267"/>
    <lineage>
        <taxon>Bacteria</taxon>
        <taxon>Pseudomonadati</taxon>
        <taxon>Pseudomonadota</taxon>
        <taxon>Gammaproteobacteria</taxon>
        <taxon>Enterobacterales</taxon>
        <taxon>Enterobacteriaceae</taxon>
        <taxon>Shigella</taxon>
    </lineage>
</organism>